<sequence>MHEKLTTRFAPSPTGYLHIGGLRTALYNYLYARKNGGNFLLRIEDTDLKRNSKEATKAIIEAFKWCGLEHDGEVTYQSERFDLYKEYVKKLLDEGKAYYCYMSKEELEELRAKQEAAKERPRYDGRYREFTGTPPQGIEPVVRIKAPQSGEIVFEDGVKGEVRFKAEDIMDDFIIARSDGTPTYNFTVVIDDALMGVSDVIRGDDHLSNTPKQIVLYEALGFKIPKFFHVAMIHGEDGKKLSKRHGATDVMEYKEMGILPQALLNFLVRLGWSHGDDEVFSLEDLKKLFDPYHINKSASCYNAKKLEWLNAHYIKTLPFEEINRQLKDLGFDLSVYEKAGFLLDLLRERAKTLHDIINGAKSIVNAPQNYDENAVQKFVNKNNLELLQAFANTLKDQKTGKDFEDFTNDFLEKKEAKLKDLAQPIRIALTGSAVSPSIFEVLEFLGVDECKKRIDNFLKVRGK</sequence>
<protein>
    <recommendedName>
        <fullName evidence="1">Glutamate--tRNA ligase 2</fullName>
        <ecNumber evidence="1">6.1.1.17</ecNumber>
    </recommendedName>
    <alternativeName>
        <fullName evidence="1">Glutamyl-tRNA synthetase 2</fullName>
        <shortName evidence="1">GluRS 2</shortName>
    </alternativeName>
</protein>
<reference key="1">
    <citation type="journal article" date="2000" name="Nature">
        <title>The genome sequence of the food-borne pathogen Campylobacter jejuni reveals hypervariable sequences.</title>
        <authorList>
            <person name="Parkhill J."/>
            <person name="Wren B.W."/>
            <person name="Mungall K.L."/>
            <person name="Ketley J.M."/>
            <person name="Churcher C.M."/>
            <person name="Basham D."/>
            <person name="Chillingworth T."/>
            <person name="Davies R.M."/>
            <person name="Feltwell T."/>
            <person name="Holroyd S."/>
            <person name="Jagels K."/>
            <person name="Karlyshev A.V."/>
            <person name="Moule S."/>
            <person name="Pallen M.J."/>
            <person name="Penn C.W."/>
            <person name="Quail M.A."/>
            <person name="Rajandream M.A."/>
            <person name="Rutherford K.M."/>
            <person name="van Vliet A.H.M."/>
            <person name="Whitehead S."/>
            <person name="Barrell B.G."/>
        </authorList>
    </citation>
    <scope>NUCLEOTIDE SEQUENCE [LARGE SCALE GENOMIC DNA]</scope>
    <source>
        <strain>ATCC 700819 / NCTC 11168</strain>
    </source>
</reference>
<reference key="2">
    <citation type="submission" date="1997-10" db="EMBL/GenBank/DDBJ databases">
        <authorList>
            <person name="Woesten M.M.S.M."/>
            <person name="Boeve M."/>
            <person name="Koot M.G.A."/>
            <person name="Nuenen A.C."/>
            <person name="van der Zeijst B.A.M."/>
        </authorList>
    </citation>
    <scope>NUCLEOTIDE SEQUENCE [GENOMIC DNA] OF 1-82</scope>
    <source>
        <strain>129108</strain>
    </source>
</reference>
<accession>O52914</accession>
<accession>Q0P8W9</accession>
<accession>Q9PN11</accession>
<evidence type="ECO:0000255" key="1">
    <source>
        <dbReference type="HAMAP-Rule" id="MF_00022"/>
    </source>
</evidence>
<name>SYE2_CAMJE</name>
<dbReference type="EC" id="6.1.1.17" evidence="1"/>
<dbReference type="EMBL" id="AL111168">
    <property type="protein sequence ID" value="CAL35402.1"/>
    <property type="molecule type" value="Genomic_DNA"/>
</dbReference>
<dbReference type="EMBL" id="AJ002027">
    <property type="protein sequence ID" value="CAA05150.1"/>
    <property type="molecule type" value="Genomic_DNA"/>
</dbReference>
<dbReference type="PIR" id="A81337">
    <property type="entry name" value="A81337"/>
</dbReference>
<dbReference type="SMR" id="O52914"/>
<dbReference type="IntAct" id="O52914">
    <property type="interactions" value="32"/>
</dbReference>
<dbReference type="STRING" id="192222.Cj1288c"/>
<dbReference type="PaxDb" id="192222-Cj1288c"/>
<dbReference type="EnsemblBacteria" id="CAL35402">
    <property type="protein sequence ID" value="CAL35402"/>
    <property type="gene ID" value="Cj1288c"/>
</dbReference>
<dbReference type="KEGG" id="cje:Cj1288c"/>
<dbReference type="PATRIC" id="fig|192222.6.peg.1270"/>
<dbReference type="eggNOG" id="COG0008">
    <property type="taxonomic scope" value="Bacteria"/>
</dbReference>
<dbReference type="HOGENOM" id="CLU_015768_6_0_7"/>
<dbReference type="OrthoDB" id="9807503at2"/>
<dbReference type="Proteomes" id="UP000000799">
    <property type="component" value="Chromosome"/>
</dbReference>
<dbReference type="GO" id="GO:0005829">
    <property type="term" value="C:cytosol"/>
    <property type="evidence" value="ECO:0007669"/>
    <property type="project" value="TreeGrafter"/>
</dbReference>
<dbReference type="GO" id="GO:0005524">
    <property type="term" value="F:ATP binding"/>
    <property type="evidence" value="ECO:0007669"/>
    <property type="project" value="UniProtKB-UniRule"/>
</dbReference>
<dbReference type="GO" id="GO:0004818">
    <property type="term" value="F:glutamate-tRNA ligase activity"/>
    <property type="evidence" value="ECO:0007669"/>
    <property type="project" value="UniProtKB-UniRule"/>
</dbReference>
<dbReference type="GO" id="GO:0000049">
    <property type="term" value="F:tRNA binding"/>
    <property type="evidence" value="ECO:0007669"/>
    <property type="project" value="InterPro"/>
</dbReference>
<dbReference type="GO" id="GO:0008270">
    <property type="term" value="F:zinc ion binding"/>
    <property type="evidence" value="ECO:0007669"/>
    <property type="project" value="InterPro"/>
</dbReference>
<dbReference type="GO" id="GO:0006424">
    <property type="term" value="P:glutamyl-tRNA aminoacylation"/>
    <property type="evidence" value="ECO:0007669"/>
    <property type="project" value="UniProtKB-UniRule"/>
</dbReference>
<dbReference type="CDD" id="cd00808">
    <property type="entry name" value="GluRS_core"/>
    <property type="match status" value="1"/>
</dbReference>
<dbReference type="FunFam" id="3.40.50.620:FF:000007">
    <property type="entry name" value="Glutamate--tRNA ligase"/>
    <property type="match status" value="1"/>
</dbReference>
<dbReference type="Gene3D" id="1.10.10.350">
    <property type="match status" value="1"/>
</dbReference>
<dbReference type="Gene3D" id="3.40.50.620">
    <property type="entry name" value="HUPs"/>
    <property type="match status" value="1"/>
</dbReference>
<dbReference type="HAMAP" id="MF_00022">
    <property type="entry name" value="Glu_tRNA_synth_type1"/>
    <property type="match status" value="1"/>
</dbReference>
<dbReference type="InterPro" id="IPR045462">
    <property type="entry name" value="aa-tRNA-synth_I_cd-bd"/>
</dbReference>
<dbReference type="InterPro" id="IPR020751">
    <property type="entry name" value="aa-tRNA-synth_I_codon-bd_sub2"/>
</dbReference>
<dbReference type="InterPro" id="IPR001412">
    <property type="entry name" value="aa-tRNA-synth_I_CS"/>
</dbReference>
<dbReference type="InterPro" id="IPR008925">
    <property type="entry name" value="aa_tRNA-synth_I_cd-bd_sf"/>
</dbReference>
<dbReference type="InterPro" id="IPR004527">
    <property type="entry name" value="Glu-tRNA-ligase_bac/mito"/>
</dbReference>
<dbReference type="InterPro" id="IPR000924">
    <property type="entry name" value="Glu/Gln-tRNA-synth"/>
</dbReference>
<dbReference type="InterPro" id="IPR020058">
    <property type="entry name" value="Glu/Gln-tRNA-synth_Ib_cat-dom"/>
</dbReference>
<dbReference type="InterPro" id="IPR049940">
    <property type="entry name" value="GluQ/Sye"/>
</dbReference>
<dbReference type="InterPro" id="IPR033910">
    <property type="entry name" value="GluRS_core"/>
</dbReference>
<dbReference type="InterPro" id="IPR014729">
    <property type="entry name" value="Rossmann-like_a/b/a_fold"/>
</dbReference>
<dbReference type="NCBIfam" id="TIGR00464">
    <property type="entry name" value="gltX_bact"/>
    <property type="match status" value="1"/>
</dbReference>
<dbReference type="PANTHER" id="PTHR43311">
    <property type="entry name" value="GLUTAMATE--TRNA LIGASE"/>
    <property type="match status" value="1"/>
</dbReference>
<dbReference type="PANTHER" id="PTHR43311:SF2">
    <property type="entry name" value="GLUTAMATE--TRNA LIGASE, MITOCHONDRIAL-RELATED"/>
    <property type="match status" value="1"/>
</dbReference>
<dbReference type="Pfam" id="PF19269">
    <property type="entry name" value="Anticodon_2"/>
    <property type="match status" value="1"/>
</dbReference>
<dbReference type="Pfam" id="PF00749">
    <property type="entry name" value="tRNA-synt_1c"/>
    <property type="match status" value="1"/>
</dbReference>
<dbReference type="PRINTS" id="PR00987">
    <property type="entry name" value="TRNASYNTHGLU"/>
</dbReference>
<dbReference type="SUPFAM" id="SSF48163">
    <property type="entry name" value="An anticodon-binding domain of class I aminoacyl-tRNA synthetases"/>
    <property type="match status" value="1"/>
</dbReference>
<dbReference type="SUPFAM" id="SSF52374">
    <property type="entry name" value="Nucleotidylyl transferase"/>
    <property type="match status" value="1"/>
</dbReference>
<dbReference type="PROSITE" id="PS00178">
    <property type="entry name" value="AA_TRNA_LIGASE_I"/>
    <property type="match status" value="1"/>
</dbReference>
<proteinExistence type="inferred from homology"/>
<gene>
    <name evidence="1" type="primary">gltX2</name>
    <name type="synonym">gltX1</name>
    <name type="ordered locus">Cj1288c</name>
</gene>
<keyword id="KW-0030">Aminoacyl-tRNA synthetase</keyword>
<keyword id="KW-0067">ATP-binding</keyword>
<keyword id="KW-0963">Cytoplasm</keyword>
<keyword id="KW-0436">Ligase</keyword>
<keyword id="KW-0547">Nucleotide-binding</keyword>
<keyword id="KW-0648">Protein biosynthesis</keyword>
<keyword id="KW-1185">Reference proteome</keyword>
<comment type="function">
    <text evidence="1">Catalyzes the attachment of glutamate to tRNA(Glu) in a two-step reaction: glutamate is first activated by ATP to form Glu-AMP and then transferred to the acceptor end of tRNA(Glu).</text>
</comment>
<comment type="catalytic activity">
    <reaction evidence="1">
        <text>tRNA(Glu) + L-glutamate + ATP = L-glutamyl-tRNA(Glu) + AMP + diphosphate</text>
        <dbReference type="Rhea" id="RHEA:23540"/>
        <dbReference type="Rhea" id="RHEA-COMP:9663"/>
        <dbReference type="Rhea" id="RHEA-COMP:9680"/>
        <dbReference type="ChEBI" id="CHEBI:29985"/>
        <dbReference type="ChEBI" id="CHEBI:30616"/>
        <dbReference type="ChEBI" id="CHEBI:33019"/>
        <dbReference type="ChEBI" id="CHEBI:78442"/>
        <dbReference type="ChEBI" id="CHEBI:78520"/>
        <dbReference type="ChEBI" id="CHEBI:456215"/>
        <dbReference type="EC" id="6.1.1.17"/>
    </reaction>
</comment>
<comment type="subunit">
    <text evidence="1">Monomer.</text>
</comment>
<comment type="subcellular location">
    <subcellularLocation>
        <location evidence="1">Cytoplasm</location>
    </subcellularLocation>
</comment>
<comment type="similarity">
    <text evidence="1">Belongs to the class-I aminoacyl-tRNA synthetase family. Glutamate--tRNA ligase type 1 subfamily.</text>
</comment>
<feature type="chain" id="PRO_0000119531" description="Glutamate--tRNA ligase 2">
    <location>
        <begin position="1"/>
        <end position="463"/>
    </location>
</feature>
<feature type="short sequence motif" description="'HIGH' region" evidence="1">
    <location>
        <begin position="11"/>
        <end position="21"/>
    </location>
</feature>
<feature type="short sequence motif" description="'KMSKS' region" evidence="1">
    <location>
        <begin position="240"/>
        <end position="244"/>
    </location>
</feature>
<feature type="binding site" evidence="1">
    <location>
        <position position="243"/>
    </location>
    <ligand>
        <name>ATP</name>
        <dbReference type="ChEBI" id="CHEBI:30616"/>
    </ligand>
</feature>
<organism>
    <name type="scientific">Campylobacter jejuni subsp. jejuni serotype O:2 (strain ATCC 700819 / NCTC 11168)</name>
    <dbReference type="NCBI Taxonomy" id="192222"/>
    <lineage>
        <taxon>Bacteria</taxon>
        <taxon>Pseudomonadati</taxon>
        <taxon>Campylobacterota</taxon>
        <taxon>Epsilonproteobacteria</taxon>
        <taxon>Campylobacterales</taxon>
        <taxon>Campylobacteraceae</taxon>
        <taxon>Campylobacter</taxon>
    </lineage>
</organism>